<dbReference type="EC" id="3.6.-.-" evidence="1"/>
<dbReference type="EMBL" id="CR382125">
    <property type="protein sequence ID" value="CAG99103.1"/>
    <property type="molecule type" value="Genomic_DNA"/>
</dbReference>
<dbReference type="RefSeq" id="XP_454016.1">
    <property type="nucleotide sequence ID" value="XM_454016.1"/>
</dbReference>
<dbReference type="SMR" id="Q6CPX3"/>
<dbReference type="FunCoup" id="Q6CPX3">
    <property type="interactions" value="1033"/>
</dbReference>
<dbReference type="STRING" id="284590.Q6CPX3"/>
<dbReference type="PaxDb" id="284590-Q6CPX3"/>
<dbReference type="KEGG" id="kla:KLLA0_E01497g"/>
<dbReference type="eggNOG" id="KOG2825">
    <property type="taxonomic scope" value="Eukaryota"/>
</dbReference>
<dbReference type="HOGENOM" id="CLU_040761_0_0_1"/>
<dbReference type="InParanoid" id="Q6CPX3"/>
<dbReference type="OMA" id="MDAPYEF"/>
<dbReference type="Proteomes" id="UP000000598">
    <property type="component" value="Chromosome E"/>
</dbReference>
<dbReference type="GO" id="GO:0043529">
    <property type="term" value="C:GET complex"/>
    <property type="evidence" value="ECO:0007669"/>
    <property type="project" value="TreeGrafter"/>
</dbReference>
<dbReference type="GO" id="GO:0005794">
    <property type="term" value="C:Golgi apparatus"/>
    <property type="evidence" value="ECO:0007669"/>
    <property type="project" value="UniProtKB-SubCell"/>
</dbReference>
<dbReference type="GO" id="GO:0005524">
    <property type="term" value="F:ATP binding"/>
    <property type="evidence" value="ECO:0007669"/>
    <property type="project" value="UniProtKB-UniRule"/>
</dbReference>
<dbReference type="GO" id="GO:0016887">
    <property type="term" value="F:ATP hydrolysis activity"/>
    <property type="evidence" value="ECO:0007669"/>
    <property type="project" value="InterPro"/>
</dbReference>
<dbReference type="GO" id="GO:0046872">
    <property type="term" value="F:metal ion binding"/>
    <property type="evidence" value="ECO:0007669"/>
    <property type="project" value="UniProtKB-KW"/>
</dbReference>
<dbReference type="GO" id="GO:0071816">
    <property type="term" value="P:tail-anchored membrane protein insertion into ER membrane"/>
    <property type="evidence" value="ECO:0007669"/>
    <property type="project" value="TreeGrafter"/>
</dbReference>
<dbReference type="CDD" id="cd02035">
    <property type="entry name" value="ArsA"/>
    <property type="match status" value="1"/>
</dbReference>
<dbReference type="FunFam" id="3.40.50.300:FF:001359">
    <property type="entry name" value="ATPase GET3"/>
    <property type="match status" value="1"/>
</dbReference>
<dbReference type="Gene3D" id="3.40.50.300">
    <property type="entry name" value="P-loop containing nucleotide triphosphate hydrolases"/>
    <property type="match status" value="1"/>
</dbReference>
<dbReference type="HAMAP" id="MF_03112">
    <property type="entry name" value="Asna1_Get3"/>
    <property type="match status" value="1"/>
</dbReference>
<dbReference type="InterPro" id="IPR025723">
    <property type="entry name" value="Anion-transp_ATPase-like_dom"/>
</dbReference>
<dbReference type="InterPro" id="IPR016300">
    <property type="entry name" value="ATPase_ArsA/GET3"/>
</dbReference>
<dbReference type="InterPro" id="IPR027542">
    <property type="entry name" value="ATPase_ArsA/GET3_euk"/>
</dbReference>
<dbReference type="InterPro" id="IPR027417">
    <property type="entry name" value="P-loop_NTPase"/>
</dbReference>
<dbReference type="NCBIfam" id="TIGR00345">
    <property type="entry name" value="GET3_arsA_TRC40"/>
    <property type="match status" value="1"/>
</dbReference>
<dbReference type="PANTHER" id="PTHR10803">
    <property type="entry name" value="ARSENICAL PUMP-DRIVING ATPASE ARSENITE-TRANSLOCATING ATPASE"/>
    <property type="match status" value="1"/>
</dbReference>
<dbReference type="PANTHER" id="PTHR10803:SF3">
    <property type="entry name" value="ATPASE GET3"/>
    <property type="match status" value="1"/>
</dbReference>
<dbReference type="Pfam" id="PF02374">
    <property type="entry name" value="ArsA_ATPase"/>
    <property type="match status" value="1"/>
</dbReference>
<dbReference type="SUPFAM" id="SSF52540">
    <property type="entry name" value="P-loop containing nucleoside triphosphate hydrolases"/>
    <property type="match status" value="1"/>
</dbReference>
<proteinExistence type="inferred from homology"/>
<evidence type="ECO:0000255" key="1">
    <source>
        <dbReference type="HAMAP-Rule" id="MF_03112"/>
    </source>
</evidence>
<organism>
    <name type="scientific">Kluyveromyces lactis (strain ATCC 8585 / CBS 2359 / DSM 70799 / NBRC 1267 / NRRL Y-1140 / WM37)</name>
    <name type="common">Yeast</name>
    <name type="synonym">Candida sphaerica</name>
    <dbReference type="NCBI Taxonomy" id="284590"/>
    <lineage>
        <taxon>Eukaryota</taxon>
        <taxon>Fungi</taxon>
        <taxon>Dikarya</taxon>
        <taxon>Ascomycota</taxon>
        <taxon>Saccharomycotina</taxon>
        <taxon>Saccharomycetes</taxon>
        <taxon>Saccharomycetales</taxon>
        <taxon>Saccharomycetaceae</taxon>
        <taxon>Kluyveromyces</taxon>
    </lineage>
</organism>
<protein>
    <recommendedName>
        <fullName evidence="1">ATPase GET3</fullName>
        <ecNumber evidence="1">3.6.-.-</ecNumber>
    </recommendedName>
    <alternativeName>
        <fullName evidence="1">Arsenical pump-driving ATPase</fullName>
    </alternativeName>
    <alternativeName>
        <fullName evidence="1">Arsenite-stimulated ATPase</fullName>
    </alternativeName>
    <alternativeName>
        <fullName evidence="1">Golgi to ER traffic protein 3</fullName>
    </alternativeName>
    <alternativeName>
        <fullName evidence="1">Guided entry of tail-anchored proteins 3</fullName>
    </alternativeName>
</protein>
<sequence length="349" mass="38836">MDLTVEPDLNSLITSSTHRWIFVGGKGGVGKTTSSCSIAIQMALAQPEKQYLLISTDPAHNLSDAFGEKFGKDARKVTGMNNLSCMEIDPSAALKDMNDMAVANNATGSGEFSDLLQGGALSELTGSIPGIDEALSFMEVMKHIKNQEQGEGDRYDTVIFDTAPTGHTLRFLQLPSTLSKLLEKFGEITARLGPMLNSLAGANNVDLVGKMSELKSNVEKIKEQFTNPDMTTFVCVCISEFLSLYETERLVQELISYDMDVNSIIVNQLLFAEYDEGDSCKRCQSRWKMQKKYLDQIDELYEDFHIVKMPLCAGEIRGLNNLKKFSQFLRKPYDPVADSKVIYELEQQD</sequence>
<name>GET3_KLULA</name>
<gene>
    <name evidence="1" type="primary">GET3</name>
    <name type="ordered locus">KLLA0E01497g</name>
</gene>
<keyword id="KW-0067">ATP-binding</keyword>
<keyword id="KW-0963">Cytoplasm</keyword>
<keyword id="KW-0256">Endoplasmic reticulum</keyword>
<keyword id="KW-0333">Golgi apparatus</keyword>
<keyword id="KW-0378">Hydrolase</keyword>
<keyword id="KW-0479">Metal-binding</keyword>
<keyword id="KW-0547">Nucleotide-binding</keyword>
<keyword id="KW-1185">Reference proteome</keyword>
<keyword id="KW-0813">Transport</keyword>
<keyword id="KW-0862">Zinc</keyword>
<feature type="chain" id="PRO_0000388208" description="ATPase GET3">
    <location>
        <begin position="1"/>
        <end position="349"/>
    </location>
</feature>
<feature type="active site" evidence="1">
    <location>
        <position position="57"/>
    </location>
</feature>
<feature type="binding site" evidence="1">
    <location>
        <begin position="26"/>
        <end position="33"/>
    </location>
    <ligand>
        <name>ATP</name>
        <dbReference type="ChEBI" id="CHEBI:30616"/>
    </ligand>
</feature>
<feature type="binding site" evidence="1">
    <location>
        <position position="240"/>
    </location>
    <ligand>
        <name>ATP</name>
        <dbReference type="ChEBI" id="CHEBI:30616"/>
    </ligand>
</feature>
<feature type="binding site" evidence="1">
    <location>
        <position position="267"/>
    </location>
    <ligand>
        <name>ATP</name>
        <dbReference type="ChEBI" id="CHEBI:30616"/>
    </ligand>
</feature>
<feature type="binding site" evidence="1">
    <location>
        <position position="280"/>
    </location>
    <ligand>
        <name>Zn(2+)</name>
        <dbReference type="ChEBI" id="CHEBI:29105"/>
        <note>ligand shared between dimeric partners</note>
    </ligand>
</feature>
<feature type="binding site" evidence="1">
    <location>
        <position position="283"/>
    </location>
    <ligand>
        <name>Zn(2+)</name>
        <dbReference type="ChEBI" id="CHEBI:29105"/>
        <note>ligand shared between dimeric partners</note>
    </ligand>
</feature>
<accession>Q6CPX3</accession>
<reference key="1">
    <citation type="journal article" date="2004" name="Nature">
        <title>Genome evolution in yeasts.</title>
        <authorList>
            <person name="Dujon B."/>
            <person name="Sherman D."/>
            <person name="Fischer G."/>
            <person name="Durrens P."/>
            <person name="Casaregola S."/>
            <person name="Lafontaine I."/>
            <person name="de Montigny J."/>
            <person name="Marck C."/>
            <person name="Neuveglise C."/>
            <person name="Talla E."/>
            <person name="Goffard N."/>
            <person name="Frangeul L."/>
            <person name="Aigle M."/>
            <person name="Anthouard V."/>
            <person name="Babour A."/>
            <person name="Barbe V."/>
            <person name="Barnay S."/>
            <person name="Blanchin S."/>
            <person name="Beckerich J.-M."/>
            <person name="Beyne E."/>
            <person name="Bleykasten C."/>
            <person name="Boisrame A."/>
            <person name="Boyer J."/>
            <person name="Cattolico L."/>
            <person name="Confanioleri F."/>
            <person name="de Daruvar A."/>
            <person name="Despons L."/>
            <person name="Fabre E."/>
            <person name="Fairhead C."/>
            <person name="Ferry-Dumazet H."/>
            <person name="Groppi A."/>
            <person name="Hantraye F."/>
            <person name="Hennequin C."/>
            <person name="Jauniaux N."/>
            <person name="Joyet P."/>
            <person name="Kachouri R."/>
            <person name="Kerrest A."/>
            <person name="Koszul R."/>
            <person name="Lemaire M."/>
            <person name="Lesur I."/>
            <person name="Ma L."/>
            <person name="Muller H."/>
            <person name="Nicaud J.-M."/>
            <person name="Nikolski M."/>
            <person name="Oztas S."/>
            <person name="Ozier-Kalogeropoulos O."/>
            <person name="Pellenz S."/>
            <person name="Potier S."/>
            <person name="Richard G.-F."/>
            <person name="Straub M.-L."/>
            <person name="Suleau A."/>
            <person name="Swennen D."/>
            <person name="Tekaia F."/>
            <person name="Wesolowski-Louvel M."/>
            <person name="Westhof E."/>
            <person name="Wirth B."/>
            <person name="Zeniou-Meyer M."/>
            <person name="Zivanovic Y."/>
            <person name="Bolotin-Fukuhara M."/>
            <person name="Thierry A."/>
            <person name="Bouchier C."/>
            <person name="Caudron B."/>
            <person name="Scarpelli C."/>
            <person name="Gaillardin C."/>
            <person name="Weissenbach J."/>
            <person name="Wincker P."/>
            <person name="Souciet J.-L."/>
        </authorList>
    </citation>
    <scope>NUCLEOTIDE SEQUENCE [LARGE SCALE GENOMIC DNA]</scope>
    <source>
        <strain>ATCC 8585 / CBS 2359 / DSM 70799 / NBRC 1267 / NRRL Y-1140 / WM37</strain>
    </source>
</reference>
<comment type="function">
    <text evidence="1">ATPase required for the post-translational delivery of tail-anchored (TA) proteins to the endoplasmic reticulum. Recognizes and selectively binds the transmembrane domain of TA proteins in the cytosol. This complex then targets to the endoplasmic reticulum by membrane-bound receptors GET1 and GET2, where the tail-anchored protein is released for insertion. This process is regulated by ATP binding and hydrolysis. ATP binding drives the homodimer towards the closed dimer state, facilitating recognition of newly synthesized TA membrane proteins. ATP hydrolysis is required for insertion. Subsequently, the homodimer reverts towards the open dimer state, lowering its affinity for the GET1-GET2 receptor, and returning it to the cytosol to initiate a new round of targeting. Cooperates with the HDEL receptor ERD2 to mediate the ATP-dependent retrieval of resident ER proteins that contain a C-terminal H-D-E-L retention signal from the Golgi to the ER. Involved in low-level resistance to the oxyanions arsenite and arsenate, and in heat tolerance.</text>
</comment>
<comment type="subunit">
    <text evidence="1">Homodimer. Component of the Golgi to ER traffic (GET) complex, which is composed of GET1, GET2 and GET3. Within the complex, GET1 and GET2 form a heterotetramer which is stabilized by phosphatidylinositol binding and which binds to the GET3 homodimer. Interacts with the chloride channel protein GEF1.</text>
</comment>
<comment type="subcellular location">
    <subcellularLocation>
        <location evidence="1">Cytoplasm</location>
    </subcellularLocation>
    <subcellularLocation>
        <location evidence="1">Endoplasmic reticulum</location>
    </subcellularLocation>
    <subcellularLocation>
        <location evidence="1">Golgi apparatus</location>
    </subcellularLocation>
    <text evidence="1">GET1 and GET2 are required for targeting GET3 to the endoplasmic reticulum.</text>
</comment>
<comment type="similarity">
    <text evidence="1">Belongs to the arsA ATPase family.</text>
</comment>